<organism>
    <name type="scientific">Arabidopsis thaliana</name>
    <name type="common">Mouse-ear cress</name>
    <dbReference type="NCBI Taxonomy" id="3702"/>
    <lineage>
        <taxon>Eukaryota</taxon>
        <taxon>Viridiplantae</taxon>
        <taxon>Streptophyta</taxon>
        <taxon>Embryophyta</taxon>
        <taxon>Tracheophyta</taxon>
        <taxon>Spermatophyta</taxon>
        <taxon>Magnoliopsida</taxon>
        <taxon>eudicotyledons</taxon>
        <taxon>Gunneridae</taxon>
        <taxon>Pentapetalae</taxon>
        <taxon>rosids</taxon>
        <taxon>malvids</taxon>
        <taxon>Brassicales</taxon>
        <taxon>Brassicaceae</taxon>
        <taxon>Camelineae</taxon>
        <taxon>Arabidopsis</taxon>
    </lineage>
</organism>
<proteinExistence type="evidence at transcript level"/>
<name>TPPD_ARATH</name>
<dbReference type="EC" id="3.1.3.12"/>
<dbReference type="EMBL" id="AC027032">
    <property type="protein sequence ID" value="AAG51089.1"/>
    <property type="status" value="ALT_SEQ"/>
    <property type="molecule type" value="Genomic_DNA"/>
</dbReference>
<dbReference type="EMBL" id="CP002684">
    <property type="protein sequence ID" value="AEE31836.1"/>
    <property type="molecule type" value="Genomic_DNA"/>
</dbReference>
<dbReference type="EMBL" id="AK176890">
    <property type="protein sequence ID" value="BAD44653.1"/>
    <property type="molecule type" value="mRNA"/>
</dbReference>
<dbReference type="EMBL" id="AY086513">
    <property type="protein sequence ID" value="AAM63513.1"/>
    <property type="molecule type" value="mRNA"/>
</dbReference>
<dbReference type="PIR" id="A86481">
    <property type="entry name" value="A86481"/>
</dbReference>
<dbReference type="RefSeq" id="NP_564464.1">
    <property type="nucleotide sequence ID" value="NM_103289.5"/>
</dbReference>
<dbReference type="SMR" id="Q67XC9"/>
<dbReference type="FunCoup" id="Q67XC9">
    <property type="interactions" value="172"/>
</dbReference>
<dbReference type="STRING" id="3702.Q67XC9"/>
<dbReference type="PaxDb" id="3702-AT1G35910.1"/>
<dbReference type="ProteomicsDB" id="228296"/>
<dbReference type="EnsemblPlants" id="AT1G35910.1">
    <property type="protein sequence ID" value="AT1G35910.1"/>
    <property type="gene ID" value="AT1G35910"/>
</dbReference>
<dbReference type="GeneID" id="840493"/>
<dbReference type="Gramene" id="AT1G35910.1">
    <property type="protein sequence ID" value="AT1G35910.1"/>
    <property type="gene ID" value="AT1G35910"/>
</dbReference>
<dbReference type="KEGG" id="ath:AT1G35910"/>
<dbReference type="Araport" id="AT1G35910"/>
<dbReference type="TAIR" id="AT1G35910">
    <property type="gene designation" value="TPPD"/>
</dbReference>
<dbReference type="eggNOG" id="KOG1050">
    <property type="taxonomic scope" value="Eukaryota"/>
</dbReference>
<dbReference type="HOGENOM" id="CLU_037265_1_2_1"/>
<dbReference type="InParanoid" id="Q67XC9"/>
<dbReference type="OMA" id="FQAANEF"/>
<dbReference type="OrthoDB" id="411251at2759"/>
<dbReference type="PhylomeDB" id="Q67XC9"/>
<dbReference type="UniPathway" id="UPA00299"/>
<dbReference type="PRO" id="PR:Q67XC9"/>
<dbReference type="Proteomes" id="UP000006548">
    <property type="component" value="Chromosome 1"/>
</dbReference>
<dbReference type="ExpressionAtlas" id="Q67XC9">
    <property type="expression patterns" value="baseline and differential"/>
</dbReference>
<dbReference type="GO" id="GO:0009507">
    <property type="term" value="C:chloroplast"/>
    <property type="evidence" value="ECO:0000314"/>
    <property type="project" value="TAIR"/>
</dbReference>
<dbReference type="GO" id="GO:0015927">
    <property type="term" value="F:trehalase activity"/>
    <property type="evidence" value="ECO:0000314"/>
    <property type="project" value="TAIR"/>
</dbReference>
<dbReference type="GO" id="GO:0004805">
    <property type="term" value="F:trehalose-phosphatase activity"/>
    <property type="evidence" value="ECO:0000314"/>
    <property type="project" value="TAIR"/>
</dbReference>
<dbReference type="GO" id="GO:0006970">
    <property type="term" value="P:response to osmotic stress"/>
    <property type="evidence" value="ECO:0000315"/>
    <property type="project" value="TAIR"/>
</dbReference>
<dbReference type="GO" id="GO:0006979">
    <property type="term" value="P:response to oxidative stress"/>
    <property type="evidence" value="ECO:0000315"/>
    <property type="project" value="TAIR"/>
</dbReference>
<dbReference type="GO" id="GO:0009651">
    <property type="term" value="P:response to salt stress"/>
    <property type="evidence" value="ECO:0000315"/>
    <property type="project" value="TAIR"/>
</dbReference>
<dbReference type="GO" id="GO:0005992">
    <property type="term" value="P:trehalose biosynthetic process"/>
    <property type="evidence" value="ECO:0007669"/>
    <property type="project" value="UniProtKB-UniPathway"/>
</dbReference>
<dbReference type="CDD" id="cd01627">
    <property type="entry name" value="HAD_TPP"/>
    <property type="match status" value="1"/>
</dbReference>
<dbReference type="FunFam" id="3.40.50.1000:FF:000073">
    <property type="entry name" value="Trehalose 6-phosphate phosphatase"/>
    <property type="match status" value="1"/>
</dbReference>
<dbReference type="FunFam" id="3.40.50.1000:FF:000099">
    <property type="entry name" value="Trehalose 6-phosphate phosphatase"/>
    <property type="match status" value="1"/>
</dbReference>
<dbReference type="Gene3D" id="3.40.50.1000">
    <property type="entry name" value="HAD superfamily/HAD-like"/>
    <property type="match status" value="2"/>
</dbReference>
<dbReference type="InterPro" id="IPR036412">
    <property type="entry name" value="HAD-like_sf"/>
</dbReference>
<dbReference type="InterPro" id="IPR006379">
    <property type="entry name" value="HAD-SF_hydro_IIB"/>
</dbReference>
<dbReference type="InterPro" id="IPR023214">
    <property type="entry name" value="HAD_sf"/>
</dbReference>
<dbReference type="InterPro" id="IPR044651">
    <property type="entry name" value="OTSB-like"/>
</dbReference>
<dbReference type="InterPro" id="IPR003337">
    <property type="entry name" value="Trehalose_PPase"/>
</dbReference>
<dbReference type="NCBIfam" id="TIGR01484">
    <property type="entry name" value="HAD-SF-IIB"/>
    <property type="match status" value="1"/>
</dbReference>
<dbReference type="NCBIfam" id="TIGR00685">
    <property type="entry name" value="T6PP"/>
    <property type="match status" value="1"/>
</dbReference>
<dbReference type="PANTHER" id="PTHR43768">
    <property type="entry name" value="TREHALOSE 6-PHOSPHATE PHOSPHATASE"/>
    <property type="match status" value="1"/>
</dbReference>
<dbReference type="PANTHER" id="PTHR43768:SF32">
    <property type="entry name" value="TREHALOSE-PHOSPHATE PHOSPHATASE C-RELATED"/>
    <property type="match status" value="1"/>
</dbReference>
<dbReference type="Pfam" id="PF02358">
    <property type="entry name" value="Trehalose_PPase"/>
    <property type="match status" value="1"/>
</dbReference>
<dbReference type="SUPFAM" id="SSF56784">
    <property type="entry name" value="HAD-like"/>
    <property type="match status" value="1"/>
</dbReference>
<sequence length="369" mass="41598">MTNHNALISDAKGSIGVAVRVPNQSLFSPGGGRYISIPRKKLVQKLEADPSQTRIHTWIEAMRASSPTRTRPGNISPLPESDEEDEYSSWMAQHPSALTMFEEIAEASKGKQIVMFLDYDGTLSPIVENPDRAYMSEEMREAVKGVARYFPTAIVTGRCRDKVRRFVKLPGLYYAGSHGMDIKGPSKRNKHNKNNKGVLFQAANEFLPMIDKVSKCLVEKMRDIEGANVENNKFCVSVHYRCVDQKDWGLVAEHVTSILSEYPKLRLTQGRKVLEIRPTIKWDKGKALEFLLESLGFANSNDVLPIYIGDDRTDEDAFKVLRNKGQGFGILVSKIPKETSATYSLQEPSEVGEFLQRLVEWKQMSLRGR</sequence>
<keyword id="KW-0378">Hydrolase</keyword>
<keyword id="KW-1185">Reference proteome</keyword>
<keyword id="KW-0346">Stress response</keyword>
<reference key="1">
    <citation type="journal article" date="2000" name="Nature">
        <title>Sequence and analysis of chromosome 1 of the plant Arabidopsis thaliana.</title>
        <authorList>
            <person name="Theologis A."/>
            <person name="Ecker J.R."/>
            <person name="Palm C.J."/>
            <person name="Federspiel N.A."/>
            <person name="Kaul S."/>
            <person name="White O."/>
            <person name="Alonso J."/>
            <person name="Altafi H."/>
            <person name="Araujo R."/>
            <person name="Bowman C.L."/>
            <person name="Brooks S.Y."/>
            <person name="Buehler E."/>
            <person name="Chan A."/>
            <person name="Chao Q."/>
            <person name="Chen H."/>
            <person name="Cheuk R.F."/>
            <person name="Chin C.W."/>
            <person name="Chung M.K."/>
            <person name="Conn L."/>
            <person name="Conway A.B."/>
            <person name="Conway A.R."/>
            <person name="Creasy T.H."/>
            <person name="Dewar K."/>
            <person name="Dunn P."/>
            <person name="Etgu P."/>
            <person name="Feldblyum T.V."/>
            <person name="Feng J.-D."/>
            <person name="Fong B."/>
            <person name="Fujii C.Y."/>
            <person name="Gill J.E."/>
            <person name="Goldsmith A.D."/>
            <person name="Haas B."/>
            <person name="Hansen N.F."/>
            <person name="Hughes B."/>
            <person name="Huizar L."/>
            <person name="Hunter J.L."/>
            <person name="Jenkins J."/>
            <person name="Johnson-Hopson C."/>
            <person name="Khan S."/>
            <person name="Khaykin E."/>
            <person name="Kim C.J."/>
            <person name="Koo H.L."/>
            <person name="Kremenetskaia I."/>
            <person name="Kurtz D.B."/>
            <person name="Kwan A."/>
            <person name="Lam B."/>
            <person name="Langin-Hooper S."/>
            <person name="Lee A."/>
            <person name="Lee J.M."/>
            <person name="Lenz C.A."/>
            <person name="Li J.H."/>
            <person name="Li Y.-P."/>
            <person name="Lin X."/>
            <person name="Liu S.X."/>
            <person name="Liu Z.A."/>
            <person name="Luros J.S."/>
            <person name="Maiti R."/>
            <person name="Marziali A."/>
            <person name="Militscher J."/>
            <person name="Miranda M."/>
            <person name="Nguyen M."/>
            <person name="Nierman W.C."/>
            <person name="Osborne B.I."/>
            <person name="Pai G."/>
            <person name="Peterson J."/>
            <person name="Pham P.K."/>
            <person name="Rizzo M."/>
            <person name="Rooney T."/>
            <person name="Rowley D."/>
            <person name="Sakano H."/>
            <person name="Salzberg S.L."/>
            <person name="Schwartz J.R."/>
            <person name="Shinn P."/>
            <person name="Southwick A.M."/>
            <person name="Sun H."/>
            <person name="Tallon L.J."/>
            <person name="Tambunga G."/>
            <person name="Toriumi M.J."/>
            <person name="Town C.D."/>
            <person name="Utterback T."/>
            <person name="Van Aken S."/>
            <person name="Vaysberg M."/>
            <person name="Vysotskaia V.S."/>
            <person name="Walker M."/>
            <person name="Wu D."/>
            <person name="Yu G."/>
            <person name="Fraser C.M."/>
            <person name="Venter J.C."/>
            <person name="Davis R.W."/>
        </authorList>
    </citation>
    <scope>NUCLEOTIDE SEQUENCE [LARGE SCALE GENOMIC DNA]</scope>
    <source>
        <strain>cv. Columbia</strain>
    </source>
</reference>
<reference key="2">
    <citation type="journal article" date="2017" name="Plant J.">
        <title>Araport11: a complete reannotation of the Arabidopsis thaliana reference genome.</title>
        <authorList>
            <person name="Cheng C.Y."/>
            <person name="Krishnakumar V."/>
            <person name="Chan A.P."/>
            <person name="Thibaud-Nissen F."/>
            <person name="Schobel S."/>
            <person name="Town C.D."/>
        </authorList>
    </citation>
    <scope>GENOME REANNOTATION</scope>
    <source>
        <strain>cv. Columbia</strain>
    </source>
</reference>
<reference key="3">
    <citation type="submission" date="2004-09" db="EMBL/GenBank/DDBJ databases">
        <title>Large-scale analysis of RIKEN Arabidopsis full-length (RAFL) cDNAs.</title>
        <authorList>
            <person name="Totoki Y."/>
            <person name="Seki M."/>
            <person name="Ishida J."/>
            <person name="Nakajima M."/>
            <person name="Enju A."/>
            <person name="Kamiya A."/>
            <person name="Narusaka M."/>
            <person name="Shin-i T."/>
            <person name="Nakagawa M."/>
            <person name="Sakamoto N."/>
            <person name="Oishi K."/>
            <person name="Kohara Y."/>
            <person name="Kobayashi M."/>
            <person name="Toyoda A."/>
            <person name="Sakaki Y."/>
            <person name="Sakurai T."/>
            <person name="Iida K."/>
            <person name="Akiyama K."/>
            <person name="Satou M."/>
            <person name="Toyoda T."/>
            <person name="Konagaya A."/>
            <person name="Carninci P."/>
            <person name="Kawai J."/>
            <person name="Hayashizaki Y."/>
            <person name="Shinozaki K."/>
        </authorList>
    </citation>
    <scope>NUCLEOTIDE SEQUENCE [LARGE SCALE MRNA]</scope>
    <source>
        <strain>cv. Columbia</strain>
    </source>
</reference>
<reference key="4">
    <citation type="submission" date="2002-03" db="EMBL/GenBank/DDBJ databases">
        <title>Full-length cDNA from Arabidopsis thaliana.</title>
        <authorList>
            <person name="Brover V.V."/>
            <person name="Troukhan M.E."/>
            <person name="Alexandrov N.A."/>
            <person name="Lu Y.-P."/>
            <person name="Flavell R.B."/>
            <person name="Feldmann K.A."/>
        </authorList>
    </citation>
    <scope>NUCLEOTIDE SEQUENCE [LARGE SCALE MRNA]</scope>
</reference>
<reference key="5">
    <citation type="journal article" date="2003" name="J. Exp. Bot.">
        <title>Is trehalose-6-phosphate a regulator of sugar metabolism in plants?</title>
        <authorList>
            <person name="Eastmond P.J."/>
            <person name="Li Y."/>
            <person name="Graham I.A."/>
        </authorList>
    </citation>
    <scope>GENE FAMILY</scope>
</reference>
<reference key="6">
    <citation type="journal article" date="2004" name="Plant Physiol.">
        <title>Trehalose mediated growth inhibition of Arabidopsis seedlings is due to trehalose-6-phosphate accumulation.</title>
        <authorList>
            <person name="Schluepmann H."/>
            <person name="van Dijken A.J.H."/>
            <person name="Aghdasi M."/>
            <person name="Wobbes B."/>
            <person name="Paul M."/>
            <person name="Smeekens S.C.M."/>
        </authorList>
    </citation>
    <scope>NOMENCLATURE</scope>
</reference>
<feature type="chain" id="PRO_0000417646" description="Probable trehalose-phosphate phosphatase D">
    <location>
        <begin position="1"/>
        <end position="369"/>
    </location>
</feature>
<feature type="region of interest" description="Disordered" evidence="2">
    <location>
        <begin position="63"/>
        <end position="85"/>
    </location>
</feature>
<feature type="sequence conflict" description="In Ref. 4; AAM63513." evidence="3" ref="4">
    <original>P</original>
    <variation>T</variation>
    <location>
        <position position="79"/>
    </location>
</feature>
<feature type="sequence conflict" description="In Ref. 4; AAM63513." evidence="3" ref="4">
    <original>R</original>
    <variation>S</variation>
    <location>
        <position position="266"/>
    </location>
</feature>
<accession>Q67XC9</accession>
<accession>Q8LCM4</accession>
<accession>Q9C8B3</accession>
<evidence type="ECO:0000250" key="1"/>
<evidence type="ECO:0000256" key="2">
    <source>
        <dbReference type="SAM" id="MobiDB-lite"/>
    </source>
</evidence>
<evidence type="ECO:0000305" key="3"/>
<comment type="function">
    <text evidence="1">Removes the phosphate from trehalose 6-phosphate to produce free trehalose. Trehalose accumulation in plant may improve abiotic stress tolerance (By similarity).</text>
</comment>
<comment type="catalytic activity">
    <reaction>
        <text>alpha,alpha-trehalose 6-phosphate + H2O = alpha,alpha-trehalose + phosphate</text>
        <dbReference type="Rhea" id="RHEA:23420"/>
        <dbReference type="ChEBI" id="CHEBI:15377"/>
        <dbReference type="ChEBI" id="CHEBI:16551"/>
        <dbReference type="ChEBI" id="CHEBI:43474"/>
        <dbReference type="ChEBI" id="CHEBI:58429"/>
        <dbReference type="EC" id="3.1.3.12"/>
    </reaction>
</comment>
<comment type="cofactor">
    <cofactor evidence="1">
        <name>a divalent metal cation</name>
        <dbReference type="ChEBI" id="CHEBI:60240"/>
    </cofactor>
</comment>
<comment type="pathway">
    <text>Glycan biosynthesis; trehalose biosynthesis.</text>
</comment>
<comment type="similarity">
    <text evidence="3">Belongs to the trehalose phosphatase family.</text>
</comment>
<comment type="sequence caution" evidence="3">
    <conflict type="erroneous gene model prediction">
        <sequence resource="EMBL-CDS" id="AAG51089"/>
    </conflict>
</comment>
<gene>
    <name type="primary">TPPD</name>
    <name type="ordered locus">At1g35910</name>
    <name type="ORF">F10O5.8</name>
</gene>
<protein>
    <recommendedName>
        <fullName>Probable trehalose-phosphate phosphatase D</fullName>
        <shortName>AtTPPD</shortName>
        <ecNumber>3.1.3.12</ecNumber>
    </recommendedName>
    <alternativeName>
        <fullName>Trehalose 6-phosphate phosphatase</fullName>
    </alternativeName>
</protein>